<accession>Q601X7</accession>
<reference key="1">
    <citation type="journal article" date="2004" name="J. Bacteriol.">
        <title>The genome sequence of Mycoplasma hyopneumoniae strain 232, the agent of swine mycoplasmosis.</title>
        <authorList>
            <person name="Minion F.C."/>
            <person name="Lefkowitz E.J."/>
            <person name="Madsen M.L."/>
            <person name="Cleary B.J."/>
            <person name="Swartzell S.M."/>
            <person name="Mahairas G.G."/>
        </authorList>
    </citation>
    <scope>NUCLEOTIDE SEQUENCE [LARGE SCALE GENOMIC DNA]</scope>
    <source>
        <strain>232</strain>
    </source>
</reference>
<evidence type="ECO:0000255" key="1">
    <source>
        <dbReference type="HAMAP-Rule" id="MF_00238"/>
    </source>
</evidence>
<keyword id="KW-0067">ATP-binding</keyword>
<keyword id="KW-0963">Cytoplasm</keyword>
<keyword id="KW-0418">Kinase</keyword>
<keyword id="KW-0547">Nucleotide-binding</keyword>
<keyword id="KW-0808">Transferase</keyword>
<name>KCY_MESH2</name>
<comment type="catalytic activity">
    <reaction evidence="1">
        <text>CMP + ATP = CDP + ADP</text>
        <dbReference type="Rhea" id="RHEA:11600"/>
        <dbReference type="ChEBI" id="CHEBI:30616"/>
        <dbReference type="ChEBI" id="CHEBI:58069"/>
        <dbReference type="ChEBI" id="CHEBI:60377"/>
        <dbReference type="ChEBI" id="CHEBI:456216"/>
        <dbReference type="EC" id="2.7.4.25"/>
    </reaction>
</comment>
<comment type="catalytic activity">
    <reaction evidence="1">
        <text>dCMP + ATP = dCDP + ADP</text>
        <dbReference type="Rhea" id="RHEA:25094"/>
        <dbReference type="ChEBI" id="CHEBI:30616"/>
        <dbReference type="ChEBI" id="CHEBI:57566"/>
        <dbReference type="ChEBI" id="CHEBI:58593"/>
        <dbReference type="ChEBI" id="CHEBI:456216"/>
        <dbReference type="EC" id="2.7.4.25"/>
    </reaction>
</comment>
<comment type="subcellular location">
    <subcellularLocation>
        <location evidence="1">Cytoplasm</location>
    </subcellularLocation>
</comment>
<comment type="similarity">
    <text evidence="1">Belongs to the cytidylate kinase family. Type 1 subfamily.</text>
</comment>
<proteinExistence type="inferred from homology"/>
<protein>
    <recommendedName>
        <fullName evidence="1">Cytidylate kinase</fullName>
        <shortName evidence="1">CK</shortName>
        <ecNumber evidence="1">2.7.4.25</ecNumber>
    </recommendedName>
    <alternativeName>
        <fullName evidence="1">Cytidine monophosphate kinase</fullName>
        <shortName evidence="1">CMP kinase</shortName>
    </alternativeName>
</protein>
<organism>
    <name type="scientific">Mesomycoplasma hyopneumoniae (strain 232)</name>
    <name type="common">Mycoplasma hyopneumoniae</name>
    <dbReference type="NCBI Taxonomy" id="295358"/>
    <lineage>
        <taxon>Bacteria</taxon>
        <taxon>Bacillati</taxon>
        <taxon>Mycoplasmatota</taxon>
        <taxon>Mycoplasmoidales</taxon>
        <taxon>Metamycoplasmataceae</taxon>
        <taxon>Mesomycoplasma</taxon>
    </lineage>
</organism>
<feature type="chain" id="PRO_0000131937" description="Cytidylate kinase">
    <location>
        <begin position="1"/>
        <end position="229"/>
    </location>
</feature>
<feature type="binding site" evidence="1">
    <location>
        <begin position="12"/>
        <end position="20"/>
    </location>
    <ligand>
        <name>ATP</name>
        <dbReference type="ChEBI" id="CHEBI:30616"/>
    </ligand>
</feature>
<sequence length="229" mass="26477">MPFKKINIAIDGPSGVGKSTIAKQIANKFNYLFINTGSLYRAIAFFCQKNQISITSERKMIKHLPPNFLSLDFEGNVWLQNQNVSNLLRNDLISKNAAIIAQYPQIRKIVTEILQSFQKNHKGIIMEGRDTTYNVMPDADLKIFLWADAETRAKRRLKQNTFLNLETDFQEILKAIEHRDYLDMTRKTNPLKKTVDSIFLDTTNFTRDQIVSQISKLVFRKIGQFSLEI</sequence>
<gene>
    <name evidence="1" type="primary">cmk</name>
    <name type="ordered locus">mhp074</name>
</gene>
<dbReference type="EC" id="2.7.4.25" evidence="1"/>
<dbReference type="EMBL" id="AE017332">
    <property type="protein sequence ID" value="AAV27397.1"/>
    <property type="molecule type" value="Genomic_DNA"/>
</dbReference>
<dbReference type="RefSeq" id="WP_011205912.1">
    <property type="nucleotide sequence ID" value="NC_006360.1"/>
</dbReference>
<dbReference type="SMR" id="Q601X7"/>
<dbReference type="KEGG" id="mhy:mhp074"/>
<dbReference type="eggNOG" id="COG0283">
    <property type="taxonomic scope" value="Bacteria"/>
</dbReference>
<dbReference type="HOGENOM" id="CLU_079959_0_2_14"/>
<dbReference type="PhylomeDB" id="Q601X7"/>
<dbReference type="Proteomes" id="UP000006822">
    <property type="component" value="Chromosome"/>
</dbReference>
<dbReference type="GO" id="GO:0005737">
    <property type="term" value="C:cytoplasm"/>
    <property type="evidence" value="ECO:0007669"/>
    <property type="project" value="UniProtKB-SubCell"/>
</dbReference>
<dbReference type="GO" id="GO:0005524">
    <property type="term" value="F:ATP binding"/>
    <property type="evidence" value="ECO:0007669"/>
    <property type="project" value="UniProtKB-UniRule"/>
</dbReference>
<dbReference type="GO" id="GO:0036430">
    <property type="term" value="F:CMP kinase activity"/>
    <property type="evidence" value="ECO:0007669"/>
    <property type="project" value="RHEA"/>
</dbReference>
<dbReference type="GO" id="GO:0036431">
    <property type="term" value="F:dCMP kinase activity"/>
    <property type="evidence" value="ECO:0007669"/>
    <property type="project" value="RHEA"/>
</dbReference>
<dbReference type="GO" id="GO:0006220">
    <property type="term" value="P:pyrimidine nucleotide metabolic process"/>
    <property type="evidence" value="ECO:0007669"/>
    <property type="project" value="UniProtKB-UniRule"/>
</dbReference>
<dbReference type="CDD" id="cd02020">
    <property type="entry name" value="CMPK"/>
    <property type="match status" value="1"/>
</dbReference>
<dbReference type="Gene3D" id="3.40.50.300">
    <property type="entry name" value="P-loop containing nucleotide triphosphate hydrolases"/>
    <property type="match status" value="1"/>
</dbReference>
<dbReference type="HAMAP" id="MF_00238">
    <property type="entry name" value="Cytidyl_kinase_type1"/>
    <property type="match status" value="1"/>
</dbReference>
<dbReference type="InterPro" id="IPR003136">
    <property type="entry name" value="Cytidylate_kin"/>
</dbReference>
<dbReference type="InterPro" id="IPR011994">
    <property type="entry name" value="Cytidylate_kinase_dom"/>
</dbReference>
<dbReference type="InterPro" id="IPR027417">
    <property type="entry name" value="P-loop_NTPase"/>
</dbReference>
<dbReference type="NCBIfam" id="TIGR00017">
    <property type="entry name" value="cmk"/>
    <property type="match status" value="1"/>
</dbReference>
<dbReference type="Pfam" id="PF02224">
    <property type="entry name" value="Cytidylate_kin"/>
    <property type="match status" value="1"/>
</dbReference>
<dbReference type="SUPFAM" id="SSF52540">
    <property type="entry name" value="P-loop containing nucleoside triphosphate hydrolases"/>
    <property type="match status" value="1"/>
</dbReference>